<proteinExistence type="inferred from homology"/>
<sequence length="631" mass="70778">MSTTKLTRREQREHAQRFIDTLAGTAFPNSRRIYVHGSQADIRVPMREIELSPTLVGGDKDNPRYEANEPIPVYDTSGPYGDPDIGIDVRQGLAKLRQPWIDARNDCAPLSERSSAYTKARLADDGLDELRFSGLLTPKRAVAGKCVTQLHYARQGIVTPEMEFIAIRENMGRERIRSEVLRQQHAGEGFGARLPENITPEFVRDEVAAGRAIIPANINHPESEPMIIGRNFLVKVNANIGNSAVTSSIEEEVEKLVWSTRWGADTVMDLSTGRYIHETREWILRNSPVPIGTVPIYQALEKVNGIAENLTWEAFRDTLLEQAEQGVDYFTIHAGVLLRYVPMTAKRLTGIVSRGGSIMAKWCLSHHQENFLYQHFREICEICAAYDVSLSLGDGLRPGSIQDANDEAQFSELRTLGELTKIAWEYDVQVMIEGPGHVPMQMIRRNMTEELEHCHEAPFYTLGPLTTDIAPGYDHFTSGIGAAMIGWFGCAMLCYVTPKEHLGLPNKEDVKQGLITYKIAAHAADLAKGHPGAQIRDNAMSKARFEFRWEDQFNLALDPFTARAYHDETLPQESGKVAHFCSMCGPKFCSMKITQEVRDYAAKQNIEAGMADMSHHFRARGGEIYLKQEEA</sequence>
<organism>
    <name type="scientific">Klebsiella pneumoniae (strain 342)</name>
    <dbReference type="NCBI Taxonomy" id="507522"/>
    <lineage>
        <taxon>Bacteria</taxon>
        <taxon>Pseudomonadati</taxon>
        <taxon>Pseudomonadota</taxon>
        <taxon>Gammaproteobacteria</taxon>
        <taxon>Enterobacterales</taxon>
        <taxon>Enterobacteriaceae</taxon>
        <taxon>Klebsiella/Raoultella group</taxon>
        <taxon>Klebsiella</taxon>
        <taxon>Klebsiella pneumoniae complex</taxon>
    </lineage>
</organism>
<protein>
    <recommendedName>
        <fullName evidence="1">Phosphomethylpyrimidine synthase</fullName>
        <ecNumber evidence="1">4.1.99.17</ecNumber>
    </recommendedName>
    <alternativeName>
        <fullName evidence="1">Hydroxymethylpyrimidine phosphate synthase</fullName>
        <shortName evidence="1">HMP-P synthase</shortName>
        <shortName evidence="1">HMP-phosphate synthase</shortName>
        <shortName evidence="1">HMPP synthase</shortName>
    </alternativeName>
    <alternativeName>
        <fullName evidence="1">Thiamine biosynthesis protein ThiC</fullName>
    </alternativeName>
</protein>
<feature type="chain" id="PRO_1000093212" description="Phosphomethylpyrimidine synthase">
    <location>
        <begin position="1"/>
        <end position="631"/>
    </location>
</feature>
<feature type="binding site" evidence="1">
    <location>
        <position position="239"/>
    </location>
    <ligand>
        <name>substrate</name>
    </ligand>
</feature>
<feature type="binding site" evidence="1">
    <location>
        <position position="268"/>
    </location>
    <ligand>
        <name>substrate</name>
    </ligand>
</feature>
<feature type="binding site" evidence="1">
    <location>
        <position position="297"/>
    </location>
    <ligand>
        <name>substrate</name>
    </ligand>
</feature>
<feature type="binding site" evidence="1">
    <location>
        <position position="333"/>
    </location>
    <ligand>
        <name>substrate</name>
    </ligand>
</feature>
<feature type="binding site" evidence="1">
    <location>
        <begin position="353"/>
        <end position="355"/>
    </location>
    <ligand>
        <name>substrate</name>
    </ligand>
</feature>
<feature type="binding site" evidence="1">
    <location>
        <begin position="394"/>
        <end position="397"/>
    </location>
    <ligand>
        <name>substrate</name>
    </ligand>
</feature>
<feature type="binding site" evidence="1">
    <location>
        <position position="433"/>
    </location>
    <ligand>
        <name>substrate</name>
    </ligand>
</feature>
<feature type="binding site" evidence="1">
    <location>
        <position position="437"/>
    </location>
    <ligand>
        <name>Zn(2+)</name>
        <dbReference type="ChEBI" id="CHEBI:29105"/>
    </ligand>
</feature>
<feature type="binding site" evidence="1">
    <location>
        <position position="460"/>
    </location>
    <ligand>
        <name>substrate</name>
    </ligand>
</feature>
<feature type="binding site" evidence="1">
    <location>
        <position position="501"/>
    </location>
    <ligand>
        <name>Zn(2+)</name>
        <dbReference type="ChEBI" id="CHEBI:29105"/>
    </ligand>
</feature>
<feature type="binding site" evidence="1">
    <location>
        <position position="581"/>
    </location>
    <ligand>
        <name>[4Fe-4S] cluster</name>
        <dbReference type="ChEBI" id="CHEBI:49883"/>
        <note>4Fe-4S-S-AdoMet</note>
    </ligand>
</feature>
<feature type="binding site" evidence="1">
    <location>
        <position position="584"/>
    </location>
    <ligand>
        <name>[4Fe-4S] cluster</name>
        <dbReference type="ChEBI" id="CHEBI:49883"/>
        <note>4Fe-4S-S-AdoMet</note>
    </ligand>
</feature>
<feature type="binding site" evidence="1">
    <location>
        <position position="589"/>
    </location>
    <ligand>
        <name>[4Fe-4S] cluster</name>
        <dbReference type="ChEBI" id="CHEBI:49883"/>
        <note>4Fe-4S-S-AdoMet</note>
    </ligand>
</feature>
<dbReference type="EC" id="4.1.99.17" evidence="1"/>
<dbReference type="EMBL" id="CP000964">
    <property type="protein sequence ID" value="ACI11709.1"/>
    <property type="molecule type" value="Genomic_DNA"/>
</dbReference>
<dbReference type="SMR" id="B5XYE4"/>
<dbReference type="KEGG" id="kpe:KPK_5298"/>
<dbReference type="HOGENOM" id="CLU_013181_2_1_6"/>
<dbReference type="UniPathway" id="UPA00060"/>
<dbReference type="Proteomes" id="UP000001734">
    <property type="component" value="Chromosome"/>
</dbReference>
<dbReference type="GO" id="GO:0005829">
    <property type="term" value="C:cytosol"/>
    <property type="evidence" value="ECO:0007669"/>
    <property type="project" value="TreeGrafter"/>
</dbReference>
<dbReference type="GO" id="GO:0051539">
    <property type="term" value="F:4 iron, 4 sulfur cluster binding"/>
    <property type="evidence" value="ECO:0007669"/>
    <property type="project" value="UniProtKB-KW"/>
</dbReference>
<dbReference type="GO" id="GO:0016830">
    <property type="term" value="F:carbon-carbon lyase activity"/>
    <property type="evidence" value="ECO:0007669"/>
    <property type="project" value="InterPro"/>
</dbReference>
<dbReference type="GO" id="GO:0008270">
    <property type="term" value="F:zinc ion binding"/>
    <property type="evidence" value="ECO:0007669"/>
    <property type="project" value="UniProtKB-UniRule"/>
</dbReference>
<dbReference type="GO" id="GO:0009228">
    <property type="term" value="P:thiamine biosynthetic process"/>
    <property type="evidence" value="ECO:0007669"/>
    <property type="project" value="UniProtKB-KW"/>
</dbReference>
<dbReference type="GO" id="GO:0009229">
    <property type="term" value="P:thiamine diphosphate biosynthetic process"/>
    <property type="evidence" value="ECO:0007669"/>
    <property type="project" value="UniProtKB-UniRule"/>
</dbReference>
<dbReference type="FunFam" id="3.20.20.540:FF:000001">
    <property type="entry name" value="Phosphomethylpyrimidine synthase"/>
    <property type="match status" value="1"/>
</dbReference>
<dbReference type="Gene3D" id="6.10.250.620">
    <property type="match status" value="1"/>
</dbReference>
<dbReference type="Gene3D" id="3.20.20.540">
    <property type="entry name" value="Radical SAM ThiC family, central domain"/>
    <property type="match status" value="1"/>
</dbReference>
<dbReference type="HAMAP" id="MF_00089">
    <property type="entry name" value="ThiC"/>
    <property type="match status" value="1"/>
</dbReference>
<dbReference type="InterPro" id="IPR037509">
    <property type="entry name" value="ThiC"/>
</dbReference>
<dbReference type="InterPro" id="IPR025747">
    <property type="entry name" value="ThiC-associated_dom"/>
</dbReference>
<dbReference type="InterPro" id="IPR038521">
    <property type="entry name" value="ThiC/Bza_core_dom"/>
</dbReference>
<dbReference type="InterPro" id="IPR002817">
    <property type="entry name" value="ThiC/BzaA/B"/>
</dbReference>
<dbReference type="NCBIfam" id="NF006763">
    <property type="entry name" value="PRK09284.1"/>
    <property type="match status" value="1"/>
</dbReference>
<dbReference type="NCBIfam" id="NF009895">
    <property type="entry name" value="PRK13352.1"/>
    <property type="match status" value="1"/>
</dbReference>
<dbReference type="NCBIfam" id="TIGR00190">
    <property type="entry name" value="thiC"/>
    <property type="match status" value="1"/>
</dbReference>
<dbReference type="PANTHER" id="PTHR30557:SF1">
    <property type="entry name" value="PHOSPHOMETHYLPYRIMIDINE SYNTHASE, CHLOROPLASTIC"/>
    <property type="match status" value="1"/>
</dbReference>
<dbReference type="PANTHER" id="PTHR30557">
    <property type="entry name" value="THIAMINE BIOSYNTHESIS PROTEIN THIC"/>
    <property type="match status" value="1"/>
</dbReference>
<dbReference type="Pfam" id="PF13667">
    <property type="entry name" value="ThiC-associated"/>
    <property type="match status" value="1"/>
</dbReference>
<dbReference type="Pfam" id="PF01964">
    <property type="entry name" value="ThiC_Rad_SAM"/>
    <property type="match status" value="1"/>
</dbReference>
<dbReference type="SFLD" id="SFLDF00407">
    <property type="entry name" value="phosphomethylpyrimidine_syntha"/>
    <property type="match status" value="1"/>
</dbReference>
<dbReference type="SFLD" id="SFLDG01114">
    <property type="entry name" value="phosphomethylpyrimidine_syntha"/>
    <property type="match status" value="1"/>
</dbReference>
<dbReference type="SFLD" id="SFLDS00113">
    <property type="entry name" value="Radical_SAM_Phosphomethylpyrim"/>
    <property type="match status" value="1"/>
</dbReference>
<comment type="function">
    <text evidence="1">Catalyzes the synthesis of the hydroxymethylpyrimidine phosphate (HMP-P) moiety of thiamine from aminoimidazole ribotide (AIR) in a radical S-adenosyl-L-methionine (SAM)-dependent reaction.</text>
</comment>
<comment type="catalytic activity">
    <reaction evidence="1">
        <text>5-amino-1-(5-phospho-beta-D-ribosyl)imidazole + S-adenosyl-L-methionine = 4-amino-2-methyl-5-(phosphooxymethyl)pyrimidine + CO + 5'-deoxyadenosine + formate + L-methionine + 3 H(+)</text>
        <dbReference type="Rhea" id="RHEA:24840"/>
        <dbReference type="ChEBI" id="CHEBI:15378"/>
        <dbReference type="ChEBI" id="CHEBI:15740"/>
        <dbReference type="ChEBI" id="CHEBI:17245"/>
        <dbReference type="ChEBI" id="CHEBI:17319"/>
        <dbReference type="ChEBI" id="CHEBI:57844"/>
        <dbReference type="ChEBI" id="CHEBI:58354"/>
        <dbReference type="ChEBI" id="CHEBI:59789"/>
        <dbReference type="ChEBI" id="CHEBI:137981"/>
        <dbReference type="EC" id="4.1.99.17"/>
    </reaction>
</comment>
<comment type="cofactor">
    <cofactor evidence="1">
        <name>[4Fe-4S] cluster</name>
        <dbReference type="ChEBI" id="CHEBI:49883"/>
    </cofactor>
    <text evidence="1">Binds 1 [4Fe-4S] cluster per subunit. The cluster is coordinated with 3 cysteines and an exchangeable S-adenosyl-L-methionine.</text>
</comment>
<comment type="pathway">
    <text evidence="1">Cofactor biosynthesis; thiamine diphosphate biosynthesis.</text>
</comment>
<comment type="subunit">
    <text evidence="1">Homodimer.</text>
</comment>
<comment type="similarity">
    <text evidence="1">Belongs to the ThiC family.</text>
</comment>
<accession>B5XYE4</accession>
<evidence type="ECO:0000255" key="1">
    <source>
        <dbReference type="HAMAP-Rule" id="MF_00089"/>
    </source>
</evidence>
<name>THIC_KLEP3</name>
<gene>
    <name evidence="1" type="primary">thiC</name>
    <name type="ordered locus">KPK_5298</name>
</gene>
<reference key="1">
    <citation type="journal article" date="2008" name="PLoS Genet.">
        <title>Complete genome sequence of the N2-fixing broad host range endophyte Klebsiella pneumoniae 342 and virulence predictions verified in mice.</title>
        <authorList>
            <person name="Fouts D.E."/>
            <person name="Tyler H.L."/>
            <person name="DeBoy R.T."/>
            <person name="Daugherty S."/>
            <person name="Ren Q."/>
            <person name="Badger J.H."/>
            <person name="Durkin A.S."/>
            <person name="Huot H."/>
            <person name="Shrivastava S."/>
            <person name="Kothari S."/>
            <person name="Dodson R.J."/>
            <person name="Mohamoud Y."/>
            <person name="Khouri H."/>
            <person name="Roesch L.F.W."/>
            <person name="Krogfelt K.A."/>
            <person name="Struve C."/>
            <person name="Triplett E.W."/>
            <person name="Methe B.A."/>
        </authorList>
    </citation>
    <scope>NUCLEOTIDE SEQUENCE [LARGE SCALE GENOMIC DNA]</scope>
    <source>
        <strain>342</strain>
    </source>
</reference>
<keyword id="KW-0004">4Fe-4S</keyword>
<keyword id="KW-0408">Iron</keyword>
<keyword id="KW-0411">Iron-sulfur</keyword>
<keyword id="KW-0456">Lyase</keyword>
<keyword id="KW-0479">Metal-binding</keyword>
<keyword id="KW-0949">S-adenosyl-L-methionine</keyword>
<keyword id="KW-0784">Thiamine biosynthesis</keyword>
<keyword id="KW-0862">Zinc</keyword>